<protein>
    <recommendedName>
        <fullName evidence="1">3-demethoxyubiquinol 3-hydroxylase</fullName>
        <shortName evidence="1">DMQ hydroxylase</shortName>
        <ecNumber evidence="1">1.14.99.60</ecNumber>
    </recommendedName>
    <alternativeName>
        <fullName evidence="1">2-nonaprenyl-3-methyl-6-methoxy-1,4-benzoquinol hydroxylase</fullName>
    </alternativeName>
</protein>
<gene>
    <name evidence="1" type="primary">coq7</name>
    <name type="ordered locus">RALTA_A2739</name>
</gene>
<reference key="1">
    <citation type="journal article" date="2008" name="Genome Res.">
        <title>Genome sequence of the beta-rhizobium Cupriavidus taiwanensis and comparative genomics of rhizobia.</title>
        <authorList>
            <person name="Amadou C."/>
            <person name="Pascal G."/>
            <person name="Mangenot S."/>
            <person name="Glew M."/>
            <person name="Bontemps C."/>
            <person name="Capela D."/>
            <person name="Carrere S."/>
            <person name="Cruveiller S."/>
            <person name="Dossat C."/>
            <person name="Lajus A."/>
            <person name="Marchetti M."/>
            <person name="Poinsot V."/>
            <person name="Rouy Z."/>
            <person name="Servin B."/>
            <person name="Saad M."/>
            <person name="Schenowitz C."/>
            <person name="Barbe V."/>
            <person name="Batut J."/>
            <person name="Medigue C."/>
            <person name="Masson-Boivin C."/>
        </authorList>
    </citation>
    <scope>NUCLEOTIDE SEQUENCE [LARGE SCALE GENOMIC DNA]</scope>
    <source>
        <strain>DSM 17343 / BCRC 17206 / CCUG 44338 / CIP 107171 / LMG 19424 / R1</strain>
    </source>
</reference>
<evidence type="ECO:0000255" key="1">
    <source>
        <dbReference type="HAMAP-Rule" id="MF_01658"/>
    </source>
</evidence>
<accession>B3R6W9</accession>
<sequence length="207" mass="22743">MDTLIKEFDVALRAIAGATRSARANPADRLAPDTEQMSAEERRHVAGLMRINHVGEVCAQALYQAQKLTARNGAVRAQMDAAAREEEDHLAWCAERLRELGSRPSLLNPLWYAGAFAIGWVAGRAGDRVSLGFVAETERQVEHHLGGHLDRLPESDSRSRAILEQMRDDEIRHGDAAREAGGMPLPAPVRALMRGASRVMTTAAYRI</sequence>
<keyword id="KW-1003">Cell membrane</keyword>
<keyword id="KW-0408">Iron</keyword>
<keyword id="KW-0472">Membrane</keyword>
<keyword id="KW-0479">Metal-binding</keyword>
<keyword id="KW-0503">Monooxygenase</keyword>
<keyword id="KW-0560">Oxidoreductase</keyword>
<keyword id="KW-0831">Ubiquinone biosynthesis</keyword>
<proteinExistence type="inferred from homology"/>
<dbReference type="EC" id="1.14.99.60" evidence="1"/>
<dbReference type="EMBL" id="CU633749">
    <property type="protein sequence ID" value="CAQ70669.1"/>
    <property type="molecule type" value="Genomic_DNA"/>
</dbReference>
<dbReference type="RefSeq" id="WP_012353963.1">
    <property type="nucleotide sequence ID" value="NC_010528.1"/>
</dbReference>
<dbReference type="SMR" id="B3R6W9"/>
<dbReference type="GeneID" id="29761212"/>
<dbReference type="KEGG" id="cti:RALTA_A2739"/>
<dbReference type="eggNOG" id="COG2941">
    <property type="taxonomic scope" value="Bacteria"/>
</dbReference>
<dbReference type="HOGENOM" id="CLU_088601_0_0_4"/>
<dbReference type="BioCyc" id="CTAI977880:RALTA_RS13330-MONOMER"/>
<dbReference type="UniPathway" id="UPA00232"/>
<dbReference type="Proteomes" id="UP000001692">
    <property type="component" value="Chromosome 1"/>
</dbReference>
<dbReference type="GO" id="GO:0005886">
    <property type="term" value="C:plasma membrane"/>
    <property type="evidence" value="ECO:0007669"/>
    <property type="project" value="UniProtKB-SubCell"/>
</dbReference>
<dbReference type="GO" id="GO:0008682">
    <property type="term" value="F:3-demethoxyubiquinol 3-hydroxylase activity"/>
    <property type="evidence" value="ECO:0007669"/>
    <property type="project" value="UniProtKB-EC"/>
</dbReference>
<dbReference type="GO" id="GO:0046872">
    <property type="term" value="F:metal ion binding"/>
    <property type="evidence" value="ECO:0007669"/>
    <property type="project" value="UniProtKB-KW"/>
</dbReference>
<dbReference type="GO" id="GO:0006744">
    <property type="term" value="P:ubiquinone biosynthetic process"/>
    <property type="evidence" value="ECO:0007669"/>
    <property type="project" value="UniProtKB-UniRule"/>
</dbReference>
<dbReference type="CDD" id="cd01042">
    <property type="entry name" value="DMQH"/>
    <property type="match status" value="1"/>
</dbReference>
<dbReference type="Gene3D" id="1.20.1260.10">
    <property type="match status" value="1"/>
</dbReference>
<dbReference type="HAMAP" id="MF_01658">
    <property type="entry name" value="COQ7"/>
    <property type="match status" value="1"/>
</dbReference>
<dbReference type="InterPro" id="IPR047809">
    <property type="entry name" value="COQ7_proteobact"/>
</dbReference>
<dbReference type="InterPro" id="IPR012347">
    <property type="entry name" value="Ferritin-like"/>
</dbReference>
<dbReference type="InterPro" id="IPR009078">
    <property type="entry name" value="Ferritin-like_SF"/>
</dbReference>
<dbReference type="InterPro" id="IPR011566">
    <property type="entry name" value="Ubq_synth_Coq7"/>
</dbReference>
<dbReference type="NCBIfam" id="NF033656">
    <property type="entry name" value="DMQ_monoox_COQ7"/>
    <property type="match status" value="1"/>
</dbReference>
<dbReference type="PANTHER" id="PTHR11237:SF4">
    <property type="entry name" value="5-DEMETHOXYUBIQUINONE HYDROXYLASE, MITOCHONDRIAL"/>
    <property type="match status" value="1"/>
</dbReference>
<dbReference type="PANTHER" id="PTHR11237">
    <property type="entry name" value="COENZYME Q10 BIOSYNTHESIS PROTEIN 7"/>
    <property type="match status" value="1"/>
</dbReference>
<dbReference type="Pfam" id="PF03232">
    <property type="entry name" value="COQ7"/>
    <property type="match status" value="1"/>
</dbReference>
<dbReference type="SUPFAM" id="SSF47240">
    <property type="entry name" value="Ferritin-like"/>
    <property type="match status" value="1"/>
</dbReference>
<comment type="function">
    <text evidence="1">Catalyzes the hydroxylation of 2-nonaprenyl-3-methyl-6-methoxy-1,4-benzoquinol during ubiquinone biosynthesis.</text>
</comment>
<comment type="catalytic activity">
    <reaction evidence="1">
        <text>a 5-methoxy-2-methyl-3-(all-trans-polyprenyl)benzene-1,4-diol + AH2 + O2 = a 3-demethylubiquinol + A + H2O</text>
        <dbReference type="Rhea" id="RHEA:50908"/>
        <dbReference type="Rhea" id="RHEA-COMP:10859"/>
        <dbReference type="Rhea" id="RHEA-COMP:10914"/>
        <dbReference type="ChEBI" id="CHEBI:13193"/>
        <dbReference type="ChEBI" id="CHEBI:15377"/>
        <dbReference type="ChEBI" id="CHEBI:15379"/>
        <dbReference type="ChEBI" id="CHEBI:17499"/>
        <dbReference type="ChEBI" id="CHEBI:84167"/>
        <dbReference type="ChEBI" id="CHEBI:84422"/>
        <dbReference type="EC" id="1.14.99.60"/>
    </reaction>
</comment>
<comment type="cofactor">
    <cofactor evidence="1">
        <name>Fe cation</name>
        <dbReference type="ChEBI" id="CHEBI:24875"/>
    </cofactor>
    <text evidence="1">Binds 2 iron ions per subunit.</text>
</comment>
<comment type="pathway">
    <text evidence="1">Cofactor biosynthesis; ubiquinone biosynthesis.</text>
</comment>
<comment type="subcellular location">
    <subcellularLocation>
        <location evidence="1">Cell membrane</location>
        <topology evidence="1">Peripheral membrane protein</topology>
    </subcellularLocation>
</comment>
<comment type="similarity">
    <text evidence="1">Belongs to the COQ7 family.</text>
</comment>
<name>COQ7_CUPTR</name>
<organism>
    <name type="scientific">Cupriavidus taiwanensis (strain DSM 17343 / BCRC 17206 / CCUG 44338 / CIP 107171 / LMG 19424 / R1)</name>
    <name type="common">Ralstonia taiwanensis (strain LMG 19424)</name>
    <dbReference type="NCBI Taxonomy" id="977880"/>
    <lineage>
        <taxon>Bacteria</taxon>
        <taxon>Pseudomonadati</taxon>
        <taxon>Pseudomonadota</taxon>
        <taxon>Betaproteobacteria</taxon>
        <taxon>Burkholderiales</taxon>
        <taxon>Burkholderiaceae</taxon>
        <taxon>Cupriavidus</taxon>
    </lineage>
</organism>
<feature type="chain" id="PRO_1000187048" description="3-demethoxyubiquinol 3-hydroxylase">
    <location>
        <begin position="1"/>
        <end position="207"/>
    </location>
</feature>
<feature type="binding site" evidence="1">
    <location>
        <position position="56"/>
    </location>
    <ligand>
        <name>Fe cation</name>
        <dbReference type="ChEBI" id="CHEBI:24875"/>
        <label>1</label>
    </ligand>
</feature>
<feature type="binding site" evidence="1">
    <location>
        <position position="86"/>
    </location>
    <ligand>
        <name>Fe cation</name>
        <dbReference type="ChEBI" id="CHEBI:24875"/>
        <label>1</label>
    </ligand>
</feature>
<feature type="binding site" evidence="1">
    <location>
        <position position="86"/>
    </location>
    <ligand>
        <name>Fe cation</name>
        <dbReference type="ChEBI" id="CHEBI:24875"/>
        <label>2</label>
    </ligand>
</feature>
<feature type="binding site" evidence="1">
    <location>
        <position position="89"/>
    </location>
    <ligand>
        <name>Fe cation</name>
        <dbReference type="ChEBI" id="CHEBI:24875"/>
        <label>1</label>
    </ligand>
</feature>
<feature type="binding site" evidence="1">
    <location>
        <position position="138"/>
    </location>
    <ligand>
        <name>Fe cation</name>
        <dbReference type="ChEBI" id="CHEBI:24875"/>
        <label>2</label>
    </ligand>
</feature>
<feature type="binding site" evidence="1">
    <location>
        <position position="170"/>
    </location>
    <ligand>
        <name>Fe cation</name>
        <dbReference type="ChEBI" id="CHEBI:24875"/>
        <label>1</label>
    </ligand>
</feature>
<feature type="binding site" evidence="1">
    <location>
        <position position="170"/>
    </location>
    <ligand>
        <name>Fe cation</name>
        <dbReference type="ChEBI" id="CHEBI:24875"/>
        <label>2</label>
    </ligand>
</feature>
<feature type="binding site" evidence="1">
    <location>
        <position position="173"/>
    </location>
    <ligand>
        <name>Fe cation</name>
        <dbReference type="ChEBI" id="CHEBI:24875"/>
        <label>2</label>
    </ligand>
</feature>